<organism>
    <name type="scientific">Aedes aegypti</name>
    <name type="common">Yellowfever mosquito</name>
    <name type="synonym">Culex aegypti</name>
    <dbReference type="NCBI Taxonomy" id="7159"/>
    <lineage>
        <taxon>Eukaryota</taxon>
        <taxon>Metazoa</taxon>
        <taxon>Ecdysozoa</taxon>
        <taxon>Arthropoda</taxon>
        <taxon>Hexapoda</taxon>
        <taxon>Insecta</taxon>
        <taxon>Pterygota</taxon>
        <taxon>Neoptera</taxon>
        <taxon>Endopterygota</taxon>
        <taxon>Diptera</taxon>
        <taxon>Nematocera</taxon>
        <taxon>Culicoidea</taxon>
        <taxon>Culicidae</taxon>
        <taxon>Culicinae</taxon>
        <taxon>Aedini</taxon>
        <taxon>Aedes</taxon>
        <taxon>Stegomyia</taxon>
    </lineage>
</organism>
<reference key="1">
    <citation type="journal article" date="1999" name="J. Biol. Chem.">
        <title>Antimicrobial activity spectrum, cDNA cloning and mRNA expression of a newly isolated member of the cecropin family from the mosquito vector Aedes aegypti.</title>
        <authorList>
            <person name="Lowenberger C.A."/>
            <person name="Charlet M."/>
            <person name="Vizioli J."/>
            <person name="Kamal S."/>
            <person name="Richman A."/>
            <person name="Christensen B.M."/>
            <person name="Bulet P."/>
        </authorList>
    </citation>
    <scope>NUCLEOTIDE SEQUENCE [MRNA]</scope>
    <scope>PROTEIN SEQUENCE OF 24-55</scope>
    <scope>FUNCTION</scope>
    <scope>TISSUE SPECIFICITY</scope>
    <scope>DEVELOPMENTAL STAGE</scope>
    <scope>INDUCTION BY BACTERIAL INFECTION</scope>
    <scope>MASS SPECTROMETRY</scope>
    <scope>VARIANT ARG-58</scope>
    <source>
        <strain>Liverpool</strain>
        <tissue>Hemolymph</tissue>
    </source>
</reference>
<reference key="2">
    <citation type="submission" date="2001-11" db="EMBL/GenBank/DDBJ databases">
        <title>Single nucleotide polymorphism and codon usage bias in Aedes aegypti.</title>
        <authorList>
            <person name="Morlais I."/>
            <person name="Severson D.W."/>
        </authorList>
    </citation>
    <scope>NUCLEOTIDE SEQUENCE [GENOMIC DNA]</scope>
    <scope>VARIANT ARG-58</scope>
    <source>
        <strain>Moyo-R</strain>
        <strain>Red-eye</strain>
    </source>
</reference>
<reference key="3">
    <citation type="submission" date="2001-05" db="EMBL/GenBank/DDBJ databases">
        <title>Aedes aegypti cecropin A gene.</title>
        <authorList>
            <person name="Morlais I."/>
            <person name="Severson D.W."/>
        </authorList>
    </citation>
    <scope>NUCLEOTIDE SEQUENCE [MRNA]</scope>
    <source>
        <strain>Moyo-R</strain>
    </source>
</reference>
<reference key="4">
    <citation type="journal article" date="2007" name="Science">
        <title>Genome sequence of Aedes aegypti, a major arbovirus vector.</title>
        <authorList>
            <person name="Nene V."/>
            <person name="Wortman J.R."/>
            <person name="Lawson D."/>
            <person name="Haas B.J."/>
            <person name="Kodira C.D."/>
            <person name="Tu Z.J."/>
            <person name="Loftus B.J."/>
            <person name="Xi Z."/>
            <person name="Megy K."/>
            <person name="Grabherr M."/>
            <person name="Ren Q."/>
            <person name="Zdobnov E.M."/>
            <person name="Lobo N.F."/>
            <person name="Campbell K.S."/>
            <person name="Brown S.E."/>
            <person name="Bonaldo M.F."/>
            <person name="Zhu J."/>
            <person name="Sinkins S.P."/>
            <person name="Hogenkamp D.G."/>
            <person name="Amedeo P."/>
            <person name="Arensburger P."/>
            <person name="Atkinson P.W."/>
            <person name="Bidwell S.L."/>
            <person name="Biedler J."/>
            <person name="Birney E."/>
            <person name="Bruggner R.V."/>
            <person name="Costas J."/>
            <person name="Coy M.R."/>
            <person name="Crabtree J."/>
            <person name="Crawford M."/>
            <person name="DeBruyn B."/>
            <person name="DeCaprio D."/>
            <person name="Eiglmeier K."/>
            <person name="Eisenstadt E."/>
            <person name="El-Dorry H."/>
            <person name="Gelbart W.M."/>
            <person name="Gomes S.L."/>
            <person name="Hammond M."/>
            <person name="Hannick L.I."/>
            <person name="Hogan J.R."/>
            <person name="Holmes M.H."/>
            <person name="Jaffe D."/>
            <person name="Johnston S.J."/>
            <person name="Kennedy R.C."/>
            <person name="Koo H."/>
            <person name="Kravitz S."/>
            <person name="Kriventseva E.V."/>
            <person name="Kulp D."/>
            <person name="Labutti K."/>
            <person name="Lee E."/>
            <person name="Li S."/>
            <person name="Lovin D.D."/>
            <person name="Mao C."/>
            <person name="Mauceli E."/>
            <person name="Menck C.F."/>
            <person name="Miller J.R."/>
            <person name="Montgomery P."/>
            <person name="Mori A."/>
            <person name="Nascimento A.L."/>
            <person name="Naveira H.F."/>
            <person name="Nusbaum C."/>
            <person name="O'Leary S.B."/>
            <person name="Orvis J."/>
            <person name="Pertea M."/>
            <person name="Quesneville H."/>
            <person name="Reidenbach K.R."/>
            <person name="Rogers Y.-H.C."/>
            <person name="Roth C.W."/>
            <person name="Schneider J.R."/>
            <person name="Schatz M."/>
            <person name="Shumway M."/>
            <person name="Stanke M."/>
            <person name="Stinson E.O."/>
            <person name="Tubio J.M.C."/>
            <person name="Vanzee J.P."/>
            <person name="Verjovski-Almeida S."/>
            <person name="Werner D."/>
            <person name="White O.R."/>
            <person name="Wyder S."/>
            <person name="Zeng Q."/>
            <person name="Zhao Q."/>
            <person name="Zhao Y."/>
            <person name="Hill C.A."/>
            <person name="Raikhel A.S."/>
            <person name="Soares M.B."/>
            <person name="Knudson D.L."/>
            <person name="Lee N.H."/>
            <person name="Galagan J."/>
            <person name="Salzberg S.L."/>
            <person name="Paulsen I.T."/>
            <person name="Dimopoulos G."/>
            <person name="Collins F.H."/>
            <person name="Bruce B."/>
            <person name="Fraser-Liggett C.M."/>
            <person name="Severson D.W."/>
        </authorList>
    </citation>
    <scope>NUCLEOTIDE SEQUENCE [LARGE SCALE GENOMIC DNA]</scope>
    <source>
        <strain>LVPib12</strain>
    </source>
</reference>
<reference evidence="7" key="5">
    <citation type="journal article" date="2018" name="Parasit. Vectors">
        <title>Anti-inflammatory activities of Aedes aegypti cecropins and their protection against murine endotoxin shock.</title>
        <authorList>
            <person name="Wei L."/>
            <person name="Yang Y."/>
            <person name="Zhou Y."/>
            <person name="Li M."/>
            <person name="Yang H."/>
            <person name="Mu L."/>
            <person name="Qian Q."/>
            <person name="Wu J."/>
            <person name="Xu W."/>
        </authorList>
    </citation>
    <scope>FUNCTION</scope>
</reference>
<evidence type="ECO:0000269" key="1">
    <source>
    </source>
</evidence>
<evidence type="ECO:0000269" key="2">
    <source>
    </source>
</evidence>
<evidence type="ECO:0000269" key="3">
    <source ref="2"/>
</evidence>
<evidence type="ECO:0000303" key="4">
    <source>
    </source>
</evidence>
<evidence type="ECO:0000303" key="5">
    <source>
    </source>
</evidence>
<evidence type="ECO:0000303" key="6">
    <source ref="3"/>
</evidence>
<evidence type="ECO:0000305" key="7"/>
<gene>
    <name type="primary">CECA</name>
    <name type="ORF">AAEL000627</name>
</gene>
<dbReference type="EMBL" id="AF117886">
    <property type="protein sequence ID" value="AAF59831.1"/>
    <property type="molecule type" value="mRNA"/>
</dbReference>
<dbReference type="EMBL" id="AY064080">
    <property type="protein sequence ID" value="AAL85581.1"/>
    <property type="molecule type" value="Genomic_DNA"/>
</dbReference>
<dbReference type="EMBL" id="AY064081">
    <property type="protein sequence ID" value="AAL85582.1"/>
    <property type="molecule type" value="Genomic_DNA"/>
</dbReference>
<dbReference type="EMBL" id="AF387488">
    <property type="protein sequence ID" value="AAK73081.1"/>
    <property type="molecule type" value="mRNA"/>
</dbReference>
<dbReference type="EMBL" id="CH477197">
    <property type="protein sequence ID" value="EAT48340.1"/>
    <property type="molecule type" value="Genomic_DNA"/>
</dbReference>
<dbReference type="RefSeq" id="XP_001649179.1">
    <property type="nucleotide sequence ID" value="XM_001649129.2"/>
</dbReference>
<dbReference type="SMR" id="P82592"/>
<dbReference type="FunCoup" id="P82592">
    <property type="interactions" value="102"/>
</dbReference>
<dbReference type="STRING" id="7159.P82592"/>
<dbReference type="PaxDb" id="7159-AAEL000627-PA"/>
<dbReference type="eggNOG" id="ENOG502T8YY">
    <property type="taxonomic scope" value="Eukaryota"/>
</dbReference>
<dbReference type="HOGENOM" id="CLU_187909_1_1_1"/>
<dbReference type="InParanoid" id="P82592"/>
<dbReference type="Proteomes" id="UP000008820">
    <property type="component" value="Unassembled WGS sequence"/>
</dbReference>
<dbReference type="Proteomes" id="UP000682892">
    <property type="component" value="Chromosome 1"/>
</dbReference>
<dbReference type="GO" id="GO:0005615">
    <property type="term" value="C:extracellular space"/>
    <property type="evidence" value="ECO:0007669"/>
    <property type="project" value="TreeGrafter"/>
</dbReference>
<dbReference type="GO" id="GO:0019731">
    <property type="term" value="P:antibacterial humoral response"/>
    <property type="evidence" value="ECO:0007669"/>
    <property type="project" value="InterPro"/>
</dbReference>
<dbReference type="GO" id="GO:0050832">
    <property type="term" value="P:defense response to fungus"/>
    <property type="evidence" value="ECO:0007669"/>
    <property type="project" value="UniProtKB-KW"/>
</dbReference>
<dbReference type="GO" id="GO:0050829">
    <property type="term" value="P:defense response to Gram-negative bacterium"/>
    <property type="evidence" value="ECO:0007669"/>
    <property type="project" value="UniProtKB-ARBA"/>
</dbReference>
<dbReference type="GO" id="GO:0050830">
    <property type="term" value="P:defense response to Gram-positive bacterium"/>
    <property type="evidence" value="ECO:0007669"/>
    <property type="project" value="TreeGrafter"/>
</dbReference>
<dbReference type="GO" id="GO:0045087">
    <property type="term" value="P:innate immune response"/>
    <property type="evidence" value="ECO:0007669"/>
    <property type="project" value="UniProtKB-KW"/>
</dbReference>
<dbReference type="GO" id="GO:0031640">
    <property type="term" value="P:killing of cells of another organism"/>
    <property type="evidence" value="ECO:0007669"/>
    <property type="project" value="UniProtKB-KW"/>
</dbReference>
<dbReference type="InterPro" id="IPR000875">
    <property type="entry name" value="Cecropin"/>
</dbReference>
<dbReference type="InterPro" id="IPR020400">
    <property type="entry name" value="Cecropin_insect"/>
</dbReference>
<dbReference type="PANTHER" id="PTHR38329">
    <property type="entry name" value="CECROPIN-A1-RELATED"/>
    <property type="match status" value="1"/>
</dbReference>
<dbReference type="PANTHER" id="PTHR38329:SF1">
    <property type="entry name" value="CECROPIN-A1-RELATED"/>
    <property type="match status" value="1"/>
</dbReference>
<dbReference type="Pfam" id="PF00272">
    <property type="entry name" value="Cecropin"/>
    <property type="match status" value="1"/>
</dbReference>
<sequence length="59" mass="6083">MNFTKLFLLIAMAVLLLTGQSEAGGLKKLGKKLEGAGKRVFNAAEKALPVVAGAKALGK</sequence>
<feature type="signal peptide" evidence="1">
    <location>
        <begin position="1"/>
        <end position="23"/>
    </location>
</feature>
<feature type="chain" id="PRO_0000004810" description="Cecropin-A">
    <location>
        <begin position="24"/>
        <end position="57"/>
    </location>
</feature>
<feature type="propeptide" id="PRO_0000004811" description="Removed in mature form (AeaeCec2)">
    <location>
        <begin position="58"/>
        <end position="59"/>
    </location>
</feature>
<feature type="sequence variant" description="In strain: Red-eye." evidence="1 3">
    <original>G</original>
    <variation>R</variation>
    <location>
        <position position="58"/>
    </location>
</feature>
<feature type="sequence conflict" description="In Ref. 1; AAF59831, 2; AAL85581/AAL85582 and 3; AAK73081." evidence="7" ref="1 2 3">
    <original>M</original>
    <variation>V</variation>
    <location>
        <position position="12"/>
    </location>
</feature>
<proteinExistence type="evidence at protein level"/>
<comment type="function">
    <text evidence="1 2">Antimicrobial peptide (PubMed:10400619). Antibacterial activity against Gram-negative bacteria E.coli D22 and D31, E.carotovora, K.pneumoniae, P.aeruginosa, S.typhimurium, E.cloacae B12 and X.campestris and Gram-positive bacteria A.viridans, M.luteus, B.megaterium and S.pyogenes. Possesses antifungal activity against F.oxysporum, F.culmorum and N.crassa, C.albicans, C.neoformans and S.cerevisiae. No activity against Gram-negative S.marcescens Db11, Gram-positive B.cereus, B.subtilis, B.thuringiensis, S.aureus and L.monocytogenes, the fungi A.fumigatus and B.bassiana and C.glabrata (PubMed:10400619). Partially neutralizes lipopolysaccharides (LPS) (PubMed:30107813). Exhibits anti-inflammatory properties: inhibits LPS-induced iNOS/NOS2 transcription, nitric oxide (NO) and pro-inflammatory cytokine production in mouse macrophages and human peripheral blood mononuclear cells (PBMCs); inhibits LPS-induced activation of MAPK and NF-kappa-B signaling pathways in mouse macrophages (PubMed:30107813).</text>
</comment>
<comment type="subcellular location">
    <subcellularLocation>
        <location evidence="7">Secreted</location>
    </subcellularLocation>
</comment>
<comment type="tissue specificity">
    <text evidence="1">Hemolymph (at protein level).</text>
</comment>
<comment type="developmental stage">
    <text evidence="1">Not detected in any immature stages and in naive adults.</text>
</comment>
<comment type="induction">
    <text evidence="1">Up-regulated following bacterial infection (PubMed:10400619). Expressed in adults within 6 hours after induction and accumulates over 7-10 days (PubMed:10400619).</text>
</comment>
<comment type="mass spectrometry" mass="3391.5" method="MALDI" evidence="1"/>
<comment type="similarity">
    <text evidence="7">Belongs to the cecropin family.</text>
</comment>
<name>CECA_AEDAE</name>
<protein>
    <recommendedName>
        <fullName evidence="4 5 6">Cecropin-A</fullName>
    </recommendedName>
    <alternativeName>
        <fullName evidence="5">AeaeCec1</fullName>
    </alternativeName>
    <alternativeName>
        <fullName evidence="5">AeaeCec2</fullName>
    </alternativeName>
</protein>
<keyword id="KW-0044">Antibiotic</keyword>
<keyword id="KW-0929">Antimicrobial</keyword>
<keyword id="KW-0903">Direct protein sequencing</keyword>
<keyword id="KW-0295">Fungicide</keyword>
<keyword id="KW-0391">Immunity</keyword>
<keyword id="KW-0399">Innate immunity</keyword>
<keyword id="KW-1185">Reference proteome</keyword>
<keyword id="KW-0964">Secreted</keyword>
<keyword id="KW-0732">Signal</keyword>
<accession>P82592</accession>
<accession>Q17NR3</accession>
<accession>Q95PI9</accession>